<sequence>MDPSSSSRARSMPPPVPMEGLQEAGPSPFLTKTFEMVGDPNTNHIVSWNRGGISFVVWDPHSFSATILPLYFKHNNFSSFVRQLNTYGFRKIEAERWEFMNEGFLMGQRDLLKSIKRRTSSSSPPSLNYSQSQPEAHDPGVELPQLREERHVLMMEISTLRQEEQRARGYVQAMEQRINGAEKKQRHMMSFLRRAVENPSLLQQIFEQKRDREEAAMIDQAGLIKMEEVEHLSELEALALEMQGYGRQRTDGVERELDDGFWEELLMNNENSDEEEANVKQD</sequence>
<reference key="1">
    <citation type="journal article" date="2000" name="Nature">
        <title>Sequence and analysis of chromosome 3 of the plant Arabidopsis thaliana.</title>
        <authorList>
            <person name="Salanoubat M."/>
            <person name="Lemcke K."/>
            <person name="Rieger M."/>
            <person name="Ansorge W."/>
            <person name="Unseld M."/>
            <person name="Fartmann B."/>
            <person name="Valle G."/>
            <person name="Bloecker H."/>
            <person name="Perez-Alonso M."/>
            <person name="Obermaier B."/>
            <person name="Delseny M."/>
            <person name="Boutry M."/>
            <person name="Grivell L.A."/>
            <person name="Mache R."/>
            <person name="Puigdomenech P."/>
            <person name="De Simone V."/>
            <person name="Choisne N."/>
            <person name="Artiguenave F."/>
            <person name="Robert C."/>
            <person name="Brottier P."/>
            <person name="Wincker P."/>
            <person name="Cattolico L."/>
            <person name="Weissenbach J."/>
            <person name="Saurin W."/>
            <person name="Quetier F."/>
            <person name="Schaefer M."/>
            <person name="Mueller-Auer S."/>
            <person name="Gabel C."/>
            <person name="Fuchs M."/>
            <person name="Benes V."/>
            <person name="Wurmbach E."/>
            <person name="Drzonek H."/>
            <person name="Erfle H."/>
            <person name="Jordan N."/>
            <person name="Bangert S."/>
            <person name="Wiedelmann R."/>
            <person name="Kranz H."/>
            <person name="Voss H."/>
            <person name="Holland R."/>
            <person name="Brandt P."/>
            <person name="Nyakatura G."/>
            <person name="Vezzi A."/>
            <person name="D'Angelo M."/>
            <person name="Pallavicini A."/>
            <person name="Toppo S."/>
            <person name="Simionati B."/>
            <person name="Conrad A."/>
            <person name="Hornischer K."/>
            <person name="Kauer G."/>
            <person name="Loehnert T.-H."/>
            <person name="Nordsiek G."/>
            <person name="Reichelt J."/>
            <person name="Scharfe M."/>
            <person name="Schoen O."/>
            <person name="Bargues M."/>
            <person name="Terol J."/>
            <person name="Climent J."/>
            <person name="Navarro P."/>
            <person name="Collado C."/>
            <person name="Perez-Perez A."/>
            <person name="Ottenwaelder B."/>
            <person name="Duchemin D."/>
            <person name="Cooke R."/>
            <person name="Laudie M."/>
            <person name="Berger-Llauro C."/>
            <person name="Purnelle B."/>
            <person name="Masuy D."/>
            <person name="de Haan M."/>
            <person name="Maarse A.C."/>
            <person name="Alcaraz J.-P."/>
            <person name="Cottet A."/>
            <person name="Casacuberta E."/>
            <person name="Monfort A."/>
            <person name="Argiriou A."/>
            <person name="Flores M."/>
            <person name="Liguori R."/>
            <person name="Vitale D."/>
            <person name="Mannhaupt G."/>
            <person name="Haase D."/>
            <person name="Schoof H."/>
            <person name="Rudd S."/>
            <person name="Zaccaria P."/>
            <person name="Mewes H.-W."/>
            <person name="Mayer K.F.X."/>
            <person name="Kaul S."/>
            <person name="Town C.D."/>
            <person name="Koo H.L."/>
            <person name="Tallon L.J."/>
            <person name="Jenkins J."/>
            <person name="Rooney T."/>
            <person name="Rizzo M."/>
            <person name="Walts A."/>
            <person name="Utterback T."/>
            <person name="Fujii C.Y."/>
            <person name="Shea T.P."/>
            <person name="Creasy T.H."/>
            <person name="Haas B."/>
            <person name="Maiti R."/>
            <person name="Wu D."/>
            <person name="Peterson J."/>
            <person name="Van Aken S."/>
            <person name="Pai G."/>
            <person name="Militscher J."/>
            <person name="Sellers P."/>
            <person name="Gill J.E."/>
            <person name="Feldblyum T.V."/>
            <person name="Preuss D."/>
            <person name="Lin X."/>
            <person name="Nierman W.C."/>
            <person name="Salzberg S.L."/>
            <person name="White O."/>
            <person name="Venter J.C."/>
            <person name="Fraser C.M."/>
            <person name="Kaneko T."/>
            <person name="Nakamura Y."/>
            <person name="Sato S."/>
            <person name="Kato T."/>
            <person name="Asamizu E."/>
            <person name="Sasamoto S."/>
            <person name="Kimura T."/>
            <person name="Idesawa K."/>
            <person name="Kawashima K."/>
            <person name="Kishida Y."/>
            <person name="Kiyokawa C."/>
            <person name="Kohara M."/>
            <person name="Matsumoto M."/>
            <person name="Matsuno A."/>
            <person name="Muraki A."/>
            <person name="Nakayama S."/>
            <person name="Nakazaki N."/>
            <person name="Shinpo S."/>
            <person name="Takeuchi C."/>
            <person name="Wada T."/>
            <person name="Watanabe A."/>
            <person name="Yamada M."/>
            <person name="Yasuda M."/>
            <person name="Tabata S."/>
        </authorList>
    </citation>
    <scope>NUCLEOTIDE SEQUENCE [LARGE SCALE GENOMIC DNA]</scope>
    <source>
        <strain>cv. Columbia</strain>
    </source>
</reference>
<reference key="2">
    <citation type="journal article" date="2017" name="Plant J.">
        <title>Araport11: a complete reannotation of the Arabidopsis thaliana reference genome.</title>
        <authorList>
            <person name="Cheng C.Y."/>
            <person name="Krishnakumar V."/>
            <person name="Chan A.P."/>
            <person name="Thibaud-Nissen F."/>
            <person name="Schobel S."/>
            <person name="Town C.D."/>
        </authorList>
    </citation>
    <scope>GENOME REANNOTATION</scope>
    <source>
        <strain>cv. Columbia</strain>
    </source>
</reference>
<reference key="3">
    <citation type="journal article" date="2006" name="Plant Biotechnol. J.">
        <title>Simultaneous high-throughput recombinational cloning of open reading frames in closed and open configurations.</title>
        <authorList>
            <person name="Underwood B.A."/>
            <person name="Vanderhaeghen R."/>
            <person name="Whitford R."/>
            <person name="Town C.D."/>
            <person name="Hilson P."/>
        </authorList>
    </citation>
    <scope>NUCLEOTIDE SEQUENCE [LARGE SCALE MRNA]</scope>
    <source>
        <strain>cv. Columbia</strain>
    </source>
</reference>
<reference key="4">
    <citation type="journal article" date="2001" name="Cell Stress Chaperones">
        <title>Arabidopsis and the heat stress transcription factor world: how many heat stress transcription factors do we need?</title>
        <authorList>
            <person name="Nover L."/>
            <person name="Bharti K."/>
            <person name="Doering P."/>
            <person name="Mishra S.K."/>
            <person name="Ganguli A."/>
            <person name="Scharf K.-D."/>
        </authorList>
    </citation>
    <scope>GENE FAMILY</scope>
    <scope>NOMENCLATURE</scope>
    <scope>DOMAIN AHA</scope>
</reference>
<reference key="5">
    <citation type="journal article" date="2008" name="J. Genet. Genomics">
        <title>Genome-wide analysis of heat shock transcription factor families in rice and Arabidopsis.</title>
        <authorList>
            <person name="Guo J."/>
            <person name="Wu J."/>
            <person name="Ji Q."/>
            <person name="Wang C."/>
            <person name="Luo L."/>
            <person name="Yuan Y."/>
            <person name="Wang Y."/>
            <person name="Wang J."/>
        </authorList>
    </citation>
    <scope>GENE FAMILY</scope>
    <scope>NOMENCLATURE</scope>
</reference>
<dbReference type="EMBL" id="AL138648">
    <property type="protein sequence ID" value="CAB86436.1"/>
    <property type="molecule type" value="Genomic_DNA"/>
</dbReference>
<dbReference type="EMBL" id="CP002686">
    <property type="protein sequence ID" value="AEE80470.1"/>
    <property type="molecule type" value="Genomic_DNA"/>
</dbReference>
<dbReference type="EMBL" id="DQ446784">
    <property type="protein sequence ID" value="ABE66034.1"/>
    <property type="molecule type" value="mRNA"/>
</dbReference>
<dbReference type="EMBL" id="DQ653166">
    <property type="protein sequence ID" value="ABK28614.1"/>
    <property type="status" value="ALT_SEQ"/>
    <property type="molecule type" value="mRNA"/>
</dbReference>
<dbReference type="PIR" id="T48124">
    <property type="entry name" value="T48124"/>
</dbReference>
<dbReference type="SMR" id="Q9M1V5"/>
<dbReference type="FunCoup" id="Q9M1V5">
    <property type="interactions" value="15"/>
</dbReference>
<dbReference type="STRING" id="3702.Q9M1V5"/>
<dbReference type="PaxDb" id="3702-AT3G63350.1"/>
<dbReference type="EnsemblPlants" id="AT3G63350.1">
    <property type="protein sequence ID" value="AT3G63350.1"/>
    <property type="gene ID" value="AT3G63350"/>
</dbReference>
<dbReference type="GeneID" id="825510"/>
<dbReference type="Gramene" id="AT3G63350.1">
    <property type="protein sequence ID" value="AT3G63350.1"/>
    <property type="gene ID" value="AT3G63350"/>
</dbReference>
<dbReference type="KEGG" id="ath:AT3G63350"/>
<dbReference type="Araport" id="AT3G63350"/>
<dbReference type="TAIR" id="AT3G63350">
    <property type="gene designation" value="AT-HSFA7B"/>
</dbReference>
<dbReference type="eggNOG" id="KOG0627">
    <property type="taxonomic scope" value="Eukaryota"/>
</dbReference>
<dbReference type="HOGENOM" id="CLU_030308_1_0_1"/>
<dbReference type="InParanoid" id="Q9M1V5"/>
<dbReference type="OMA" id="WEFMNEG"/>
<dbReference type="PhylomeDB" id="Q9M1V5"/>
<dbReference type="PRO" id="PR:Q9M1V5"/>
<dbReference type="Proteomes" id="UP000006548">
    <property type="component" value="Chromosome 3"/>
</dbReference>
<dbReference type="ExpressionAtlas" id="Q9M1V5">
    <property type="expression patterns" value="baseline and differential"/>
</dbReference>
<dbReference type="GO" id="GO:0005737">
    <property type="term" value="C:cytoplasm"/>
    <property type="evidence" value="ECO:0007669"/>
    <property type="project" value="UniProtKB-SubCell"/>
</dbReference>
<dbReference type="GO" id="GO:0005634">
    <property type="term" value="C:nucleus"/>
    <property type="evidence" value="ECO:0007669"/>
    <property type="project" value="UniProtKB-SubCell"/>
</dbReference>
<dbReference type="GO" id="GO:0003700">
    <property type="term" value="F:DNA-binding transcription factor activity"/>
    <property type="evidence" value="ECO:0000250"/>
    <property type="project" value="TAIR"/>
</dbReference>
<dbReference type="GO" id="GO:0043565">
    <property type="term" value="F:sequence-specific DNA binding"/>
    <property type="evidence" value="ECO:0007669"/>
    <property type="project" value="InterPro"/>
</dbReference>
<dbReference type="GO" id="GO:0009408">
    <property type="term" value="P:response to heat"/>
    <property type="evidence" value="ECO:0000270"/>
    <property type="project" value="TAIR"/>
</dbReference>
<dbReference type="FunFam" id="1.10.10.10:FF:000367">
    <property type="entry name" value="Heat stress transcription factor A-8"/>
    <property type="match status" value="1"/>
</dbReference>
<dbReference type="Gene3D" id="1.10.10.10">
    <property type="entry name" value="Winged helix-like DNA-binding domain superfamily/Winged helix DNA-binding domain"/>
    <property type="match status" value="1"/>
</dbReference>
<dbReference type="InterPro" id="IPR000232">
    <property type="entry name" value="HSF_DNA-bd"/>
</dbReference>
<dbReference type="InterPro" id="IPR036388">
    <property type="entry name" value="WH-like_DNA-bd_sf"/>
</dbReference>
<dbReference type="InterPro" id="IPR036390">
    <property type="entry name" value="WH_DNA-bd_sf"/>
</dbReference>
<dbReference type="PANTHER" id="PTHR10015">
    <property type="entry name" value="HEAT SHOCK TRANSCRIPTION FACTOR"/>
    <property type="match status" value="1"/>
</dbReference>
<dbReference type="PANTHER" id="PTHR10015:SF449">
    <property type="entry name" value="HEAT STRESS TRANSCRIPTION FACTOR A-7B"/>
    <property type="match status" value="1"/>
</dbReference>
<dbReference type="Pfam" id="PF00447">
    <property type="entry name" value="HSF_DNA-bind"/>
    <property type="match status" value="1"/>
</dbReference>
<dbReference type="PRINTS" id="PR00056">
    <property type="entry name" value="HSFDOMAIN"/>
</dbReference>
<dbReference type="SMART" id="SM00415">
    <property type="entry name" value="HSF"/>
    <property type="match status" value="1"/>
</dbReference>
<dbReference type="SUPFAM" id="SSF46785">
    <property type="entry name" value="Winged helix' DNA-binding domain"/>
    <property type="match status" value="1"/>
</dbReference>
<dbReference type="PROSITE" id="PS00434">
    <property type="entry name" value="HSF_DOMAIN"/>
    <property type="match status" value="1"/>
</dbReference>
<accession>Q9M1V5</accession>
<accession>A0MF41</accession>
<comment type="function">
    <text>Transcriptional activator that specifically binds DNA sequence 5'-AGAAnnTTCT-3' known as heat shock promoter elements (HSE).</text>
</comment>
<comment type="subunit">
    <text evidence="1">Homotrimer.</text>
</comment>
<comment type="subcellular location">
    <subcellularLocation>
        <location evidence="5">Cytoplasm</location>
    </subcellularLocation>
    <subcellularLocation>
        <location evidence="5">Nucleus</location>
    </subcellularLocation>
</comment>
<comment type="domain">
    <text evidence="4">The hydrophobic-rich region (HR-A/B) corresponds to the oligomerization domain. AHA motif is a transcriptional activator element.</text>
</comment>
<comment type="PTM">
    <text evidence="1">Exhibits temperature-dependent phosphorylation.</text>
</comment>
<comment type="similarity">
    <text evidence="5">Belongs to the HSF family. Class A subfamily.</text>
</comment>
<comment type="sequence caution" evidence="5">
    <conflict type="erroneous termination">
        <sequence resource="EMBL-CDS" id="ABK28614"/>
    </conflict>
    <text>Extended C-terminus.</text>
</comment>
<evidence type="ECO:0000250" key="1"/>
<evidence type="ECO:0000255" key="2"/>
<evidence type="ECO:0000256" key="3">
    <source>
        <dbReference type="SAM" id="MobiDB-lite"/>
    </source>
</evidence>
<evidence type="ECO:0000269" key="4">
    <source>
    </source>
</evidence>
<evidence type="ECO:0000305" key="5"/>
<keyword id="KW-0010">Activator</keyword>
<keyword id="KW-0963">Cytoplasm</keyword>
<keyword id="KW-0238">DNA-binding</keyword>
<keyword id="KW-0539">Nucleus</keyword>
<keyword id="KW-0597">Phosphoprotein</keyword>
<keyword id="KW-1185">Reference proteome</keyword>
<keyword id="KW-0346">Stress response</keyword>
<keyword id="KW-0804">Transcription</keyword>
<keyword id="KW-0805">Transcription regulation</keyword>
<gene>
    <name type="primary">HSFA7B</name>
    <name type="synonym">HSF10</name>
    <name type="ordered locus">At3g63350</name>
    <name type="ORF">F16M2.200</name>
</gene>
<protein>
    <recommendedName>
        <fullName>Heat stress transcription factor A-7b</fullName>
        <shortName>AtHsfA7b</shortName>
    </recommendedName>
    <alternativeName>
        <fullName>AtHsf-10</fullName>
    </alternativeName>
</protein>
<name>HFA7B_ARATH</name>
<organism>
    <name type="scientific">Arabidopsis thaliana</name>
    <name type="common">Mouse-ear cress</name>
    <dbReference type="NCBI Taxonomy" id="3702"/>
    <lineage>
        <taxon>Eukaryota</taxon>
        <taxon>Viridiplantae</taxon>
        <taxon>Streptophyta</taxon>
        <taxon>Embryophyta</taxon>
        <taxon>Tracheophyta</taxon>
        <taxon>Spermatophyta</taxon>
        <taxon>Magnoliopsida</taxon>
        <taxon>eudicotyledons</taxon>
        <taxon>Gunneridae</taxon>
        <taxon>Pentapetalae</taxon>
        <taxon>rosids</taxon>
        <taxon>malvids</taxon>
        <taxon>Brassicales</taxon>
        <taxon>Brassicaceae</taxon>
        <taxon>Camelineae</taxon>
        <taxon>Arabidopsis</taxon>
    </lineage>
</organism>
<feature type="chain" id="PRO_0000270810" description="Heat stress transcription factor A-7b">
    <location>
        <begin position="1"/>
        <end position="282"/>
    </location>
</feature>
<feature type="DNA-binding region" evidence="1">
    <location>
        <begin position="26"/>
        <end position="120"/>
    </location>
</feature>
<feature type="region of interest" description="Disordered" evidence="3">
    <location>
        <begin position="1"/>
        <end position="24"/>
    </location>
</feature>
<feature type="region of interest" description="Disordered" evidence="3">
    <location>
        <begin position="117"/>
        <end position="139"/>
    </location>
</feature>
<feature type="region of interest" description="Hydrophobic repeat HR-A/B">
    <location>
        <begin position="137"/>
        <end position="196"/>
    </location>
</feature>
<feature type="short sequence motif" description="Nuclear localization signal" evidence="2">
    <location>
        <begin position="208"/>
        <end position="212"/>
    </location>
</feature>
<feature type="short sequence motif" description="Nuclear export signal" evidence="2">
    <location>
        <begin position="232"/>
        <end position="240"/>
    </location>
</feature>
<feature type="short sequence motif" description="AHA">
    <location>
        <begin position="259"/>
        <end position="268"/>
    </location>
</feature>
<feature type="compositionally biased region" description="Low complexity" evidence="3">
    <location>
        <begin position="1"/>
        <end position="11"/>
    </location>
</feature>
<feature type="compositionally biased region" description="Low complexity" evidence="3">
    <location>
        <begin position="120"/>
        <end position="134"/>
    </location>
</feature>
<proteinExistence type="evidence at transcript level"/>